<sequence length="85" mass="9232">MASLLQLRDAIALNGSAEASQLSRQLAIPLPLVNAMLEKLTAMGKIERIELDHSGCLTGSCKSCPEGHQHCNTVIYQLKEPHAHQ</sequence>
<protein>
    <recommendedName>
        <fullName evidence="1">Probable [Fe-S]-dependent transcriptional repressor</fullName>
    </recommendedName>
</protein>
<organism>
    <name type="scientific">Yersinia pestis</name>
    <dbReference type="NCBI Taxonomy" id="632"/>
    <lineage>
        <taxon>Bacteria</taxon>
        <taxon>Pseudomonadati</taxon>
        <taxon>Pseudomonadota</taxon>
        <taxon>Gammaproteobacteria</taxon>
        <taxon>Enterobacterales</taxon>
        <taxon>Yersiniaceae</taxon>
        <taxon>Yersinia</taxon>
    </lineage>
</organism>
<name>FEOC_YERPE</name>
<keyword id="KW-0238">DNA-binding</keyword>
<keyword id="KW-0408">Iron</keyword>
<keyword id="KW-0411">Iron-sulfur</keyword>
<keyword id="KW-0479">Metal-binding</keyword>
<keyword id="KW-1185">Reference proteome</keyword>
<keyword id="KW-0678">Repressor</keyword>
<keyword id="KW-0804">Transcription</keyword>
<keyword id="KW-0805">Transcription regulation</keyword>
<reference key="1">
    <citation type="journal article" date="2001" name="Nature">
        <title>Genome sequence of Yersinia pestis, the causative agent of plague.</title>
        <authorList>
            <person name="Parkhill J."/>
            <person name="Wren B.W."/>
            <person name="Thomson N.R."/>
            <person name="Titball R.W."/>
            <person name="Holden M.T.G."/>
            <person name="Prentice M.B."/>
            <person name="Sebaihia M."/>
            <person name="James K.D."/>
            <person name="Churcher C.M."/>
            <person name="Mungall K.L."/>
            <person name="Baker S."/>
            <person name="Basham D."/>
            <person name="Bentley S.D."/>
            <person name="Brooks K."/>
            <person name="Cerdeno-Tarraga A.-M."/>
            <person name="Chillingworth T."/>
            <person name="Cronin A."/>
            <person name="Davies R.M."/>
            <person name="Davis P."/>
            <person name="Dougan G."/>
            <person name="Feltwell T."/>
            <person name="Hamlin N."/>
            <person name="Holroyd S."/>
            <person name="Jagels K."/>
            <person name="Karlyshev A.V."/>
            <person name="Leather S."/>
            <person name="Moule S."/>
            <person name="Oyston P.C.F."/>
            <person name="Quail M.A."/>
            <person name="Rutherford K.M."/>
            <person name="Simmonds M."/>
            <person name="Skelton J."/>
            <person name="Stevens K."/>
            <person name="Whitehead S."/>
            <person name="Barrell B.G."/>
        </authorList>
    </citation>
    <scope>NUCLEOTIDE SEQUENCE [LARGE SCALE GENOMIC DNA]</scope>
    <source>
        <strain>CO-92 / Biovar Orientalis</strain>
    </source>
</reference>
<reference key="2">
    <citation type="journal article" date="2002" name="J. Bacteriol.">
        <title>Genome sequence of Yersinia pestis KIM.</title>
        <authorList>
            <person name="Deng W."/>
            <person name="Burland V."/>
            <person name="Plunkett G. III"/>
            <person name="Boutin A."/>
            <person name="Mayhew G.F."/>
            <person name="Liss P."/>
            <person name="Perna N.T."/>
            <person name="Rose D.J."/>
            <person name="Mau B."/>
            <person name="Zhou S."/>
            <person name="Schwartz D.C."/>
            <person name="Fetherston J.D."/>
            <person name="Lindler L.E."/>
            <person name="Brubaker R.R."/>
            <person name="Plano G.V."/>
            <person name="Straley S.C."/>
            <person name="McDonough K.A."/>
            <person name="Nilles M.L."/>
            <person name="Matson J.S."/>
            <person name="Blattner F.R."/>
            <person name="Perry R.D."/>
        </authorList>
    </citation>
    <scope>NUCLEOTIDE SEQUENCE [LARGE SCALE GENOMIC DNA]</scope>
    <source>
        <strain>KIM10+ / Biovar Mediaevalis</strain>
    </source>
</reference>
<reference key="3">
    <citation type="journal article" date="2004" name="DNA Res.">
        <title>Complete genome sequence of Yersinia pestis strain 91001, an isolate avirulent to humans.</title>
        <authorList>
            <person name="Song Y."/>
            <person name="Tong Z."/>
            <person name="Wang J."/>
            <person name="Wang L."/>
            <person name="Guo Z."/>
            <person name="Han Y."/>
            <person name="Zhang J."/>
            <person name="Pei D."/>
            <person name="Zhou D."/>
            <person name="Qin H."/>
            <person name="Pang X."/>
            <person name="Han Y."/>
            <person name="Zhai J."/>
            <person name="Li M."/>
            <person name="Cui B."/>
            <person name="Qi Z."/>
            <person name="Jin L."/>
            <person name="Dai R."/>
            <person name="Chen F."/>
            <person name="Li S."/>
            <person name="Ye C."/>
            <person name="Du Z."/>
            <person name="Lin W."/>
            <person name="Wang J."/>
            <person name="Yu J."/>
            <person name="Yang H."/>
            <person name="Wang J."/>
            <person name="Huang P."/>
            <person name="Yang R."/>
        </authorList>
    </citation>
    <scope>NUCLEOTIDE SEQUENCE [LARGE SCALE GENOMIC DNA]</scope>
    <source>
        <strain>91001 / Biovar Mediaevalis</strain>
    </source>
</reference>
<gene>
    <name evidence="1" type="primary">feoC</name>
    <name type="ordered locus">YPO0131</name>
    <name type="ordered locus">y3910</name>
    <name type="ordered locus">YP_0132</name>
</gene>
<comment type="function">
    <text evidence="1">May function as a transcriptional regulator that controls feoABC expression.</text>
</comment>
<comment type="similarity">
    <text evidence="1">Belongs to the FeoC family.</text>
</comment>
<accession>Q7CFX5</accession>
<accession>Q74Y43</accession>
<proteinExistence type="inferred from homology"/>
<dbReference type="EMBL" id="AL590842">
    <property type="protein sequence ID" value="CAL18817.1"/>
    <property type="molecule type" value="Genomic_DNA"/>
</dbReference>
<dbReference type="EMBL" id="AE009952">
    <property type="protein sequence ID" value="AAM87454.1"/>
    <property type="molecule type" value="Genomic_DNA"/>
</dbReference>
<dbReference type="EMBL" id="AE017042">
    <property type="protein sequence ID" value="AAS60410.1"/>
    <property type="molecule type" value="Genomic_DNA"/>
</dbReference>
<dbReference type="PIR" id="AH0016">
    <property type="entry name" value="AH0016"/>
</dbReference>
<dbReference type="RefSeq" id="WP_002208920.1">
    <property type="nucleotide sequence ID" value="NZ_WUCM01000004.1"/>
</dbReference>
<dbReference type="RefSeq" id="YP_002345217.1">
    <property type="nucleotide sequence ID" value="NC_003143.1"/>
</dbReference>
<dbReference type="SMR" id="Q7CFX5"/>
<dbReference type="STRING" id="214092.YPO0131"/>
<dbReference type="PaxDb" id="214092-YPO0131"/>
<dbReference type="DNASU" id="1148857"/>
<dbReference type="EnsemblBacteria" id="AAS60410">
    <property type="protein sequence ID" value="AAS60410"/>
    <property type="gene ID" value="YP_0132"/>
</dbReference>
<dbReference type="KEGG" id="ype:YPO0131"/>
<dbReference type="KEGG" id="ypk:y3910"/>
<dbReference type="KEGG" id="ypm:YP_0132"/>
<dbReference type="PATRIC" id="fig|214092.21.peg.357"/>
<dbReference type="eggNOG" id="ENOG50330S2">
    <property type="taxonomic scope" value="Bacteria"/>
</dbReference>
<dbReference type="HOGENOM" id="CLU_189182_0_0_6"/>
<dbReference type="OMA" id="HTPQPMI"/>
<dbReference type="OrthoDB" id="6903254at2"/>
<dbReference type="Proteomes" id="UP000000815">
    <property type="component" value="Chromosome"/>
</dbReference>
<dbReference type="Proteomes" id="UP000001019">
    <property type="component" value="Chromosome"/>
</dbReference>
<dbReference type="Proteomes" id="UP000002490">
    <property type="component" value="Chromosome"/>
</dbReference>
<dbReference type="GO" id="GO:0003677">
    <property type="term" value="F:DNA binding"/>
    <property type="evidence" value="ECO:0007669"/>
    <property type="project" value="UniProtKB-KW"/>
</dbReference>
<dbReference type="GO" id="GO:0005506">
    <property type="term" value="F:iron ion binding"/>
    <property type="evidence" value="ECO:0007669"/>
    <property type="project" value="UniProtKB-UniRule"/>
</dbReference>
<dbReference type="GO" id="GO:0051536">
    <property type="term" value="F:iron-sulfur cluster binding"/>
    <property type="evidence" value="ECO:0007669"/>
    <property type="project" value="UniProtKB-KW"/>
</dbReference>
<dbReference type="Gene3D" id="1.10.10.10">
    <property type="entry name" value="Winged helix-like DNA-binding domain superfamily/Winged helix DNA-binding domain"/>
    <property type="match status" value="1"/>
</dbReference>
<dbReference type="HAMAP" id="MF_01586">
    <property type="entry name" value="FeoC"/>
    <property type="match status" value="1"/>
</dbReference>
<dbReference type="InterPro" id="IPR023732">
    <property type="entry name" value="FeoC"/>
</dbReference>
<dbReference type="InterPro" id="IPR015102">
    <property type="entry name" value="Tscrpt_reg_HTH_FeoC"/>
</dbReference>
<dbReference type="InterPro" id="IPR036388">
    <property type="entry name" value="WH-like_DNA-bd_sf"/>
</dbReference>
<dbReference type="InterPro" id="IPR036390">
    <property type="entry name" value="WH_DNA-bd_sf"/>
</dbReference>
<dbReference type="Pfam" id="PF09012">
    <property type="entry name" value="FeoC"/>
    <property type="match status" value="1"/>
</dbReference>
<dbReference type="SUPFAM" id="SSF46785">
    <property type="entry name" value="Winged helix' DNA-binding domain"/>
    <property type="match status" value="1"/>
</dbReference>
<evidence type="ECO:0000255" key="1">
    <source>
        <dbReference type="HAMAP-Rule" id="MF_01586"/>
    </source>
</evidence>
<feature type="chain" id="PRO_0000313074" description="Probable [Fe-S]-dependent transcriptional repressor">
    <location>
        <begin position="1"/>
        <end position="85"/>
    </location>
</feature>
<feature type="binding site" evidence="1">
    <location>
        <position position="56"/>
    </location>
    <ligand>
        <name>iron-sulfur cluster</name>
        <dbReference type="ChEBI" id="CHEBI:30408"/>
    </ligand>
</feature>
<feature type="binding site" evidence="1">
    <location>
        <position position="61"/>
    </location>
    <ligand>
        <name>iron-sulfur cluster</name>
        <dbReference type="ChEBI" id="CHEBI:30408"/>
    </ligand>
</feature>
<feature type="binding site" evidence="1">
    <location>
        <position position="64"/>
    </location>
    <ligand>
        <name>iron-sulfur cluster</name>
        <dbReference type="ChEBI" id="CHEBI:30408"/>
    </ligand>
</feature>
<feature type="binding site" evidence="1">
    <location>
        <position position="71"/>
    </location>
    <ligand>
        <name>iron-sulfur cluster</name>
        <dbReference type="ChEBI" id="CHEBI:30408"/>
    </ligand>
</feature>